<gene>
    <name type="primary">GSTU19</name>
    <name type="synonym">GST8</name>
    <name type="ordered locus">At1g78380</name>
    <name type="ORF">F3F9.11</name>
</gene>
<accession>Q9ZRW8</accession>
<accession>Q8LBS1</accession>
<comment type="function">
    <text evidence="2 6 8">Catalyzes the glutathionylation of 12-oxophytodienoate (OPDA). In vitro, possesses glutathione S-transferase activity toward 1-chloro-2,4-dinitrobenzene (CDNB) and benzyl isothiocyanate (BITC), and glutathione peroxidase activity toward cumene hydroperoxide.</text>
</comment>
<comment type="catalytic activity">
    <reaction>
        <text>RX + glutathione = an S-substituted glutathione + a halide anion + H(+)</text>
        <dbReference type="Rhea" id="RHEA:16437"/>
        <dbReference type="ChEBI" id="CHEBI:15378"/>
        <dbReference type="ChEBI" id="CHEBI:16042"/>
        <dbReference type="ChEBI" id="CHEBI:17792"/>
        <dbReference type="ChEBI" id="CHEBI:57925"/>
        <dbReference type="ChEBI" id="CHEBI:90779"/>
        <dbReference type="EC" id="2.5.1.18"/>
    </reaction>
</comment>
<comment type="subcellular location">
    <subcellularLocation>
        <location evidence="7">Cytoplasm</location>
        <location evidence="7">Cytosol</location>
    </subcellularLocation>
</comment>
<comment type="induction">
    <text evidence="2 3 4 5 6 9">By dehydration stress, salicylic acid, ethylene, methyl jasmonate, auxin, H(2)O(2), copper, benoxacor, isothiocyanates and the pathogen Hyaloperonospora parasitica.</text>
</comment>
<comment type="similarity">
    <text evidence="10">Belongs to the GST superfamily. Tau family.</text>
</comment>
<protein>
    <recommendedName>
        <fullName>Glutathione S-transferase U19</fullName>
        <shortName>AtGSTU19</shortName>
        <ecNumber>2.5.1.18</ecNumber>
    </recommendedName>
    <alternativeName>
        <fullName>GST class-tau member 19</fullName>
    </alternativeName>
    <alternativeName>
        <fullName>Glutathione S-transferase 8</fullName>
    </alternativeName>
</protein>
<dbReference type="EC" id="2.5.1.18"/>
<dbReference type="EMBL" id="AJ012571">
    <property type="protein sequence ID" value="CAA10060.1"/>
    <property type="molecule type" value="mRNA"/>
</dbReference>
<dbReference type="EMBL" id="AC013430">
    <property type="status" value="NOT_ANNOTATED_CDS"/>
    <property type="molecule type" value="Genomic_DNA"/>
</dbReference>
<dbReference type="EMBL" id="CP002684">
    <property type="protein sequence ID" value="AEE36099.1"/>
    <property type="molecule type" value="Genomic_DNA"/>
</dbReference>
<dbReference type="EMBL" id="AF385691">
    <property type="protein sequence ID" value="AAK60284.1"/>
    <property type="molecule type" value="mRNA"/>
</dbReference>
<dbReference type="EMBL" id="AY078012">
    <property type="protein sequence ID" value="AAL77713.1"/>
    <property type="molecule type" value="mRNA"/>
</dbReference>
<dbReference type="EMBL" id="AY087032">
    <property type="protein sequence ID" value="AAM64593.1"/>
    <property type="molecule type" value="mRNA"/>
</dbReference>
<dbReference type="PIR" id="T51607">
    <property type="entry name" value="T51607"/>
</dbReference>
<dbReference type="RefSeq" id="NP_565178.1">
    <property type="nucleotide sequence ID" value="NM_106485.4"/>
</dbReference>
<dbReference type="SMR" id="Q9ZRW8"/>
<dbReference type="BioGRID" id="29393">
    <property type="interactions" value="26"/>
</dbReference>
<dbReference type="FunCoup" id="Q9ZRW8">
    <property type="interactions" value="759"/>
</dbReference>
<dbReference type="IntAct" id="Q9ZRW8">
    <property type="interactions" value="23"/>
</dbReference>
<dbReference type="STRING" id="3702.Q9ZRW8"/>
<dbReference type="iPTMnet" id="Q9ZRW8"/>
<dbReference type="SwissPalm" id="Q9ZRW8"/>
<dbReference type="PaxDb" id="3702-AT1G78380.1"/>
<dbReference type="ProteomicsDB" id="247232"/>
<dbReference type="EnsemblPlants" id="AT1G78380.1">
    <property type="protein sequence ID" value="AT1G78380.1"/>
    <property type="gene ID" value="AT1G78380"/>
</dbReference>
<dbReference type="GeneID" id="844174"/>
<dbReference type="Gramene" id="AT1G78380.1">
    <property type="protein sequence ID" value="AT1G78380.1"/>
    <property type="gene ID" value="AT1G78380"/>
</dbReference>
<dbReference type="KEGG" id="ath:AT1G78380"/>
<dbReference type="Araport" id="AT1G78380"/>
<dbReference type="TAIR" id="AT1G78380">
    <property type="gene designation" value="GSTU19"/>
</dbReference>
<dbReference type="eggNOG" id="KOG0406">
    <property type="taxonomic scope" value="Eukaryota"/>
</dbReference>
<dbReference type="HOGENOM" id="CLU_011226_18_2_1"/>
<dbReference type="InParanoid" id="Q9ZRW8"/>
<dbReference type="OMA" id="ENTYFGG"/>
<dbReference type="OrthoDB" id="202840at2759"/>
<dbReference type="PhylomeDB" id="Q9ZRW8"/>
<dbReference type="BioCyc" id="ARA:AT1G78380-MONOMER"/>
<dbReference type="BioCyc" id="MetaCyc:AT1G78380-MONOMER"/>
<dbReference type="BRENDA" id="2.5.1.18">
    <property type="organism ID" value="399"/>
</dbReference>
<dbReference type="CD-CODE" id="4299E36E">
    <property type="entry name" value="Nucleolus"/>
</dbReference>
<dbReference type="PRO" id="PR:Q9ZRW8"/>
<dbReference type="Proteomes" id="UP000006548">
    <property type="component" value="Chromosome 1"/>
</dbReference>
<dbReference type="ExpressionAtlas" id="Q9ZRW8">
    <property type="expression patterns" value="baseline and differential"/>
</dbReference>
<dbReference type="GO" id="GO:0009507">
    <property type="term" value="C:chloroplast"/>
    <property type="evidence" value="ECO:0007005"/>
    <property type="project" value="TAIR"/>
</dbReference>
<dbReference type="GO" id="GO:0009570">
    <property type="term" value="C:chloroplast stroma"/>
    <property type="evidence" value="ECO:0007005"/>
    <property type="project" value="TAIR"/>
</dbReference>
<dbReference type="GO" id="GO:0005737">
    <property type="term" value="C:cytoplasm"/>
    <property type="evidence" value="ECO:0000303"/>
    <property type="project" value="TAIR"/>
</dbReference>
<dbReference type="GO" id="GO:0005829">
    <property type="term" value="C:cytosol"/>
    <property type="evidence" value="ECO:0007005"/>
    <property type="project" value="TAIR"/>
</dbReference>
<dbReference type="GO" id="GO:0005739">
    <property type="term" value="C:mitochondrion"/>
    <property type="evidence" value="ECO:0007005"/>
    <property type="project" value="TAIR"/>
</dbReference>
<dbReference type="GO" id="GO:0000325">
    <property type="term" value="C:plant-type vacuole"/>
    <property type="evidence" value="ECO:0007005"/>
    <property type="project" value="TAIR"/>
</dbReference>
<dbReference type="GO" id="GO:0005886">
    <property type="term" value="C:plasma membrane"/>
    <property type="evidence" value="ECO:0007005"/>
    <property type="project" value="TAIR"/>
</dbReference>
<dbReference type="GO" id="GO:0043295">
    <property type="term" value="F:glutathione binding"/>
    <property type="evidence" value="ECO:0000314"/>
    <property type="project" value="TAIR"/>
</dbReference>
<dbReference type="GO" id="GO:0004364">
    <property type="term" value="F:glutathione transferase activity"/>
    <property type="evidence" value="ECO:0000250"/>
    <property type="project" value="TAIR"/>
</dbReference>
<dbReference type="GO" id="GO:0004601">
    <property type="term" value="F:peroxidase activity"/>
    <property type="evidence" value="ECO:0007669"/>
    <property type="project" value="UniProtKB-KW"/>
</dbReference>
<dbReference type="GO" id="GO:0042631">
    <property type="term" value="P:cellular response to water deprivation"/>
    <property type="evidence" value="ECO:0000270"/>
    <property type="project" value="TAIR"/>
</dbReference>
<dbReference type="GO" id="GO:0006749">
    <property type="term" value="P:glutathione metabolic process"/>
    <property type="evidence" value="ECO:0007669"/>
    <property type="project" value="InterPro"/>
</dbReference>
<dbReference type="GO" id="GO:0006979">
    <property type="term" value="P:response to oxidative stress"/>
    <property type="evidence" value="ECO:0000270"/>
    <property type="project" value="TAIR"/>
</dbReference>
<dbReference type="GO" id="GO:0009407">
    <property type="term" value="P:toxin catabolic process"/>
    <property type="evidence" value="ECO:0000304"/>
    <property type="project" value="TAIR"/>
</dbReference>
<dbReference type="CDD" id="cd03185">
    <property type="entry name" value="GST_C_Tau"/>
    <property type="match status" value="1"/>
</dbReference>
<dbReference type="CDD" id="cd03058">
    <property type="entry name" value="GST_N_Tau"/>
    <property type="match status" value="1"/>
</dbReference>
<dbReference type="FunFam" id="1.20.1050.10:FF:000018">
    <property type="entry name" value="Glutathione S-transferase U20"/>
    <property type="match status" value="1"/>
</dbReference>
<dbReference type="FunFam" id="3.40.30.10:FF:000014">
    <property type="entry name" value="Tau class glutathione S-transferase"/>
    <property type="match status" value="1"/>
</dbReference>
<dbReference type="Gene3D" id="1.20.1050.10">
    <property type="match status" value="1"/>
</dbReference>
<dbReference type="Gene3D" id="3.40.30.10">
    <property type="entry name" value="Glutaredoxin"/>
    <property type="match status" value="1"/>
</dbReference>
<dbReference type="InterPro" id="IPR010987">
    <property type="entry name" value="Glutathione-S-Trfase_C-like"/>
</dbReference>
<dbReference type="InterPro" id="IPR036282">
    <property type="entry name" value="Glutathione-S-Trfase_C_sf"/>
</dbReference>
<dbReference type="InterPro" id="IPR004045">
    <property type="entry name" value="Glutathione_S-Trfase_N"/>
</dbReference>
<dbReference type="InterPro" id="IPR045074">
    <property type="entry name" value="GST_C_Tau"/>
</dbReference>
<dbReference type="InterPro" id="IPR045073">
    <property type="entry name" value="Omega/Tau-like"/>
</dbReference>
<dbReference type="InterPro" id="IPR036249">
    <property type="entry name" value="Thioredoxin-like_sf"/>
</dbReference>
<dbReference type="PANTHER" id="PTHR11260:SF781">
    <property type="entry name" value="GLUTATHIONE S-TRANSFERASE U19"/>
    <property type="match status" value="1"/>
</dbReference>
<dbReference type="PANTHER" id="PTHR11260">
    <property type="entry name" value="GLUTATHIONE S-TRANSFERASE, GST, SUPERFAMILY, GST DOMAIN CONTAINING"/>
    <property type="match status" value="1"/>
</dbReference>
<dbReference type="Pfam" id="PF13410">
    <property type="entry name" value="GST_C_2"/>
    <property type="match status" value="1"/>
</dbReference>
<dbReference type="Pfam" id="PF02798">
    <property type="entry name" value="GST_N"/>
    <property type="match status" value="1"/>
</dbReference>
<dbReference type="SFLD" id="SFLDG01152">
    <property type="entry name" value="Main.3:_Omega-_and_Tau-like"/>
    <property type="match status" value="1"/>
</dbReference>
<dbReference type="SFLD" id="SFLDG00358">
    <property type="entry name" value="Main_(cytGST)"/>
    <property type="match status" value="1"/>
</dbReference>
<dbReference type="SUPFAM" id="SSF47616">
    <property type="entry name" value="GST C-terminal domain-like"/>
    <property type="match status" value="1"/>
</dbReference>
<dbReference type="SUPFAM" id="SSF52833">
    <property type="entry name" value="Thioredoxin-like"/>
    <property type="match status" value="1"/>
</dbReference>
<dbReference type="PROSITE" id="PS50405">
    <property type="entry name" value="GST_CTER"/>
    <property type="match status" value="1"/>
</dbReference>
<dbReference type="PROSITE" id="PS50404">
    <property type="entry name" value="GST_NTER"/>
    <property type="match status" value="1"/>
</dbReference>
<feature type="chain" id="PRO_0000413565" description="Glutathione S-transferase U19">
    <location>
        <begin position="1"/>
        <end position="219"/>
    </location>
</feature>
<feature type="domain" description="GST N-terminal">
    <location>
        <begin position="3"/>
        <end position="82"/>
    </location>
</feature>
<feature type="domain" description="GST C-terminal">
    <location>
        <begin position="88"/>
        <end position="208"/>
    </location>
</feature>
<feature type="binding site" evidence="1">
    <location>
        <begin position="13"/>
        <end position="14"/>
    </location>
    <ligand>
        <name>glutathione</name>
        <dbReference type="ChEBI" id="CHEBI:57925"/>
    </ligand>
</feature>
<feature type="binding site" evidence="1">
    <location>
        <begin position="39"/>
        <end position="40"/>
    </location>
    <ligand>
        <name>glutathione</name>
        <dbReference type="ChEBI" id="CHEBI:57925"/>
    </ligand>
</feature>
<feature type="binding site" evidence="1">
    <location>
        <begin position="53"/>
        <end position="54"/>
    </location>
    <ligand>
        <name>glutathione</name>
        <dbReference type="ChEBI" id="CHEBI:57925"/>
    </ligand>
</feature>
<feature type="binding site" evidence="1">
    <location>
        <begin position="66"/>
        <end position="67"/>
    </location>
    <ligand>
        <name>glutathione</name>
        <dbReference type="ChEBI" id="CHEBI:57925"/>
    </ligand>
</feature>
<feature type="modified residue" description="Phosphoserine" evidence="11">
    <location>
        <position position="198"/>
    </location>
</feature>
<feature type="sequence conflict" description="In Ref. 5; AAM64593." evidence="10" ref="5">
    <original>G</original>
    <variation>R</variation>
    <location>
        <position position="16"/>
    </location>
</feature>
<evidence type="ECO:0000250" key="1"/>
<evidence type="ECO:0000269" key="2">
    <source>
    </source>
</evidence>
<evidence type="ECO:0000269" key="3">
    <source>
    </source>
</evidence>
<evidence type="ECO:0000269" key="4">
    <source>
    </source>
</evidence>
<evidence type="ECO:0000269" key="5">
    <source>
    </source>
</evidence>
<evidence type="ECO:0000269" key="6">
    <source>
    </source>
</evidence>
<evidence type="ECO:0000269" key="7">
    <source>
    </source>
</evidence>
<evidence type="ECO:0000269" key="8">
    <source>
    </source>
</evidence>
<evidence type="ECO:0000269" key="9">
    <source>
    </source>
</evidence>
<evidence type="ECO:0000305" key="10"/>
<evidence type="ECO:0007744" key="11">
    <source>
    </source>
</evidence>
<reference key="1">
    <citation type="journal article" date="2002" name="Physiol. Plantarum">
        <title>Drought regulation of GST8, encoding the Arabidopsis homologue of ParC/Nt107 glutathione transferase/peroxidase.</title>
        <authorList>
            <person name="Bianchi M.W."/>
            <person name="Roux C."/>
            <person name="Vartanian N."/>
        </authorList>
    </citation>
    <scope>NUCLEOTIDE SEQUENCE [MRNA]</scope>
    <scope>INDUCTION</scope>
</reference>
<reference key="2">
    <citation type="journal article" date="2000" name="Nature">
        <title>Sequence and analysis of chromosome 1 of the plant Arabidopsis thaliana.</title>
        <authorList>
            <person name="Theologis A."/>
            <person name="Ecker J.R."/>
            <person name="Palm C.J."/>
            <person name="Federspiel N.A."/>
            <person name="Kaul S."/>
            <person name="White O."/>
            <person name="Alonso J."/>
            <person name="Altafi H."/>
            <person name="Araujo R."/>
            <person name="Bowman C.L."/>
            <person name="Brooks S.Y."/>
            <person name="Buehler E."/>
            <person name="Chan A."/>
            <person name="Chao Q."/>
            <person name="Chen H."/>
            <person name="Cheuk R.F."/>
            <person name="Chin C.W."/>
            <person name="Chung M.K."/>
            <person name="Conn L."/>
            <person name="Conway A.B."/>
            <person name="Conway A.R."/>
            <person name="Creasy T.H."/>
            <person name="Dewar K."/>
            <person name="Dunn P."/>
            <person name="Etgu P."/>
            <person name="Feldblyum T.V."/>
            <person name="Feng J.-D."/>
            <person name="Fong B."/>
            <person name="Fujii C.Y."/>
            <person name="Gill J.E."/>
            <person name="Goldsmith A.D."/>
            <person name="Haas B."/>
            <person name="Hansen N.F."/>
            <person name="Hughes B."/>
            <person name="Huizar L."/>
            <person name="Hunter J.L."/>
            <person name="Jenkins J."/>
            <person name="Johnson-Hopson C."/>
            <person name="Khan S."/>
            <person name="Khaykin E."/>
            <person name="Kim C.J."/>
            <person name="Koo H.L."/>
            <person name="Kremenetskaia I."/>
            <person name="Kurtz D.B."/>
            <person name="Kwan A."/>
            <person name="Lam B."/>
            <person name="Langin-Hooper S."/>
            <person name="Lee A."/>
            <person name="Lee J.M."/>
            <person name="Lenz C.A."/>
            <person name="Li J.H."/>
            <person name="Li Y.-P."/>
            <person name="Lin X."/>
            <person name="Liu S.X."/>
            <person name="Liu Z.A."/>
            <person name="Luros J.S."/>
            <person name="Maiti R."/>
            <person name="Marziali A."/>
            <person name="Militscher J."/>
            <person name="Miranda M."/>
            <person name="Nguyen M."/>
            <person name="Nierman W.C."/>
            <person name="Osborne B.I."/>
            <person name="Pai G."/>
            <person name="Peterson J."/>
            <person name="Pham P.K."/>
            <person name="Rizzo M."/>
            <person name="Rooney T."/>
            <person name="Rowley D."/>
            <person name="Sakano H."/>
            <person name="Salzberg S.L."/>
            <person name="Schwartz J.R."/>
            <person name="Shinn P."/>
            <person name="Southwick A.M."/>
            <person name="Sun H."/>
            <person name="Tallon L.J."/>
            <person name="Tambunga G."/>
            <person name="Toriumi M.J."/>
            <person name="Town C.D."/>
            <person name="Utterback T."/>
            <person name="Van Aken S."/>
            <person name="Vaysberg M."/>
            <person name="Vysotskaia V.S."/>
            <person name="Walker M."/>
            <person name="Wu D."/>
            <person name="Yu G."/>
            <person name="Fraser C.M."/>
            <person name="Venter J.C."/>
            <person name="Davis R.W."/>
        </authorList>
    </citation>
    <scope>NUCLEOTIDE SEQUENCE [LARGE SCALE GENOMIC DNA]</scope>
    <source>
        <strain>cv. Columbia</strain>
    </source>
</reference>
<reference key="3">
    <citation type="journal article" date="2017" name="Plant J.">
        <title>Araport11: a complete reannotation of the Arabidopsis thaliana reference genome.</title>
        <authorList>
            <person name="Cheng C.Y."/>
            <person name="Krishnakumar V."/>
            <person name="Chan A.P."/>
            <person name="Thibaud-Nissen F."/>
            <person name="Schobel S."/>
            <person name="Town C.D."/>
        </authorList>
    </citation>
    <scope>GENOME REANNOTATION</scope>
    <source>
        <strain>cv. Columbia</strain>
    </source>
</reference>
<reference key="4">
    <citation type="journal article" date="2003" name="Science">
        <title>Empirical analysis of transcriptional activity in the Arabidopsis genome.</title>
        <authorList>
            <person name="Yamada K."/>
            <person name="Lim J."/>
            <person name="Dale J.M."/>
            <person name="Chen H."/>
            <person name="Shinn P."/>
            <person name="Palm C.J."/>
            <person name="Southwick A.M."/>
            <person name="Wu H.C."/>
            <person name="Kim C.J."/>
            <person name="Nguyen M."/>
            <person name="Pham P.K."/>
            <person name="Cheuk R.F."/>
            <person name="Karlin-Newmann G."/>
            <person name="Liu S.X."/>
            <person name="Lam B."/>
            <person name="Sakano H."/>
            <person name="Wu T."/>
            <person name="Yu G."/>
            <person name="Miranda M."/>
            <person name="Quach H.L."/>
            <person name="Tripp M."/>
            <person name="Chang C.H."/>
            <person name="Lee J.M."/>
            <person name="Toriumi M.J."/>
            <person name="Chan M.M."/>
            <person name="Tang C.C."/>
            <person name="Onodera C.S."/>
            <person name="Deng J.M."/>
            <person name="Akiyama K."/>
            <person name="Ansari Y."/>
            <person name="Arakawa T."/>
            <person name="Banh J."/>
            <person name="Banno F."/>
            <person name="Bowser L."/>
            <person name="Brooks S.Y."/>
            <person name="Carninci P."/>
            <person name="Chao Q."/>
            <person name="Choy N."/>
            <person name="Enju A."/>
            <person name="Goldsmith A.D."/>
            <person name="Gurjal M."/>
            <person name="Hansen N.F."/>
            <person name="Hayashizaki Y."/>
            <person name="Johnson-Hopson C."/>
            <person name="Hsuan V.W."/>
            <person name="Iida K."/>
            <person name="Karnes M."/>
            <person name="Khan S."/>
            <person name="Koesema E."/>
            <person name="Ishida J."/>
            <person name="Jiang P.X."/>
            <person name="Jones T."/>
            <person name="Kawai J."/>
            <person name="Kamiya A."/>
            <person name="Meyers C."/>
            <person name="Nakajima M."/>
            <person name="Narusaka M."/>
            <person name="Seki M."/>
            <person name="Sakurai T."/>
            <person name="Satou M."/>
            <person name="Tamse R."/>
            <person name="Vaysberg M."/>
            <person name="Wallender E.K."/>
            <person name="Wong C."/>
            <person name="Yamamura Y."/>
            <person name="Yuan S."/>
            <person name="Shinozaki K."/>
            <person name="Davis R.W."/>
            <person name="Theologis A."/>
            <person name="Ecker J.R."/>
        </authorList>
    </citation>
    <scope>NUCLEOTIDE SEQUENCE [LARGE SCALE MRNA]</scope>
    <source>
        <strain>cv. Columbia</strain>
    </source>
</reference>
<reference key="5">
    <citation type="submission" date="2002-03" db="EMBL/GenBank/DDBJ databases">
        <title>Full-length cDNA from Arabidopsis thaliana.</title>
        <authorList>
            <person name="Brover V.V."/>
            <person name="Troukhan M.E."/>
            <person name="Alexandrov N.A."/>
            <person name="Lu Y.-P."/>
            <person name="Flavell R.B."/>
            <person name="Feldmann K.A."/>
        </authorList>
    </citation>
    <scope>NUCLEOTIDE SEQUENCE [LARGE SCALE MRNA]</scope>
</reference>
<reference key="6">
    <citation type="journal article" date="2002" name="Plant Mol. Biol.">
        <title>Probing the diversity of the Arabidopsis glutathione S-transferase gene family.</title>
        <authorList>
            <person name="Wagner U."/>
            <person name="Edwards R."/>
            <person name="Dixon D.P."/>
            <person name="Mauch F."/>
        </authorList>
    </citation>
    <scope>FUNCTION</scope>
    <scope>INDUCTION</scope>
    <scope>GENE FAMILY</scope>
    <scope>NOMENCLATURE</scope>
    <source>
        <strain>cv. Columbia</strain>
    </source>
</reference>
<reference key="7">
    <citation type="journal article" date="2002" name="Plant Physiol.">
        <title>Induction of glutathione S-transferases in Arabidopsis by herbicide safeners.</title>
        <authorList>
            <person name="DeRidder B.P."/>
            <person name="Dixon D.P."/>
            <person name="Beussman D.J."/>
            <person name="Edwards R."/>
            <person name="Goldsbrough P.B."/>
        </authorList>
    </citation>
    <scope>INDUCTION</scope>
</reference>
<reference key="8">
    <citation type="journal article" date="2004" name="J. Biol. Chem.">
        <title>Proteomic analysis of Arabidopsis glutathione S-transferases from benoxacor- and copper-treated seedlings.</title>
        <authorList>
            <person name="Smith A.P."/>
            <person name="DeRidder B.P."/>
            <person name="Guo W.J."/>
            <person name="Seeley E.H."/>
            <person name="Regnier F.E."/>
            <person name="Goldsbrough P.B."/>
        </authorList>
    </citation>
    <scope>INDUCTION</scope>
</reference>
<reference key="9">
    <citation type="journal article" date="2006" name="Plant Physiol.">
        <title>Organ-specific expression of glutathione S-transferases and the efficacy of herbicide safeners in Arabidopsis.</title>
        <authorList>
            <person name="DeRidder B.P."/>
            <person name="Goldsbrough P.B."/>
        </authorList>
    </citation>
    <scope>FUNCTION</scope>
    <scope>INDUCTION</scope>
</reference>
<reference key="10">
    <citation type="journal article" date="2009" name="J. Biol. Chem.">
        <title>Selective binding of glutathione conjugates of fatty acid derivatives by plant glutathione transferases.</title>
        <authorList>
            <person name="Dixon D.P."/>
            <person name="Edwards R."/>
        </authorList>
    </citation>
    <scope>FUNCTION</scope>
</reference>
<reference key="11">
    <citation type="journal article" date="2009" name="J. Exp. Bot.">
        <title>Enzyme activities and subcellular localization of members of the Arabidopsis glutathione transferase superfamily.</title>
        <authorList>
            <person name="Dixon D.P."/>
            <person name="Hawkins T."/>
            <person name="Hussey P.J."/>
            <person name="Edwards R."/>
        </authorList>
    </citation>
    <scope>SUBCELLULAR LOCATION</scope>
</reference>
<reference key="12">
    <citation type="journal article" date="2010" name="J. Plant Physiol.">
        <title>Exogenously applied isothiocyanates enhance glutathione S-transferase expression in Arabidopsis but act as herbicides at higher concentrations.</title>
        <authorList>
            <person name="Hara M."/>
            <person name="Yatsuzuka Y."/>
            <person name="Tabata K."/>
            <person name="Kuboi T."/>
        </authorList>
    </citation>
    <scope>INDUCTION</scope>
</reference>
<reference key="13">
    <citation type="journal article" date="2012" name="J. Proteome Res.">
        <title>Identification of phosphoproteins in Arabidopsis thaliana leaves using polyethylene glycol fractionation, immobilized metal-ion affinity chromatography, two-dimensional gel electrophoresis and mass spectrometry.</title>
        <authorList>
            <person name="Aryal U.K."/>
            <person name="Krochko J.E."/>
            <person name="Ross A.R."/>
        </authorList>
    </citation>
    <scope>PHOSPHORYLATION [LARGE SCALE ANALYSIS] AT SER-198</scope>
    <scope>IDENTIFICATION BY MASS SPECTROMETRY [LARGE SCALE ANALYSIS]</scope>
</reference>
<sequence length="219" mass="25651">MANEVILLDFWPSMFGMRTRIALREKGVEFEYREEDLRNKSPLLLQMNPIHKKIPVLIHNGKPVNESIIQVQYIDEVWSHKNPILPSDPYLRAQARFWADFIDKKLYDAQRKVWATKGEEQEAGKKDFIEILKTLESELGDKPYFSGDDFGYVDIALIGFYTWFPAYEKFANFSIESEVPKLIAWVKKCLQRESVAKSLPDPEKVTEFVSELRKKFVPE</sequence>
<organism>
    <name type="scientific">Arabidopsis thaliana</name>
    <name type="common">Mouse-ear cress</name>
    <dbReference type="NCBI Taxonomy" id="3702"/>
    <lineage>
        <taxon>Eukaryota</taxon>
        <taxon>Viridiplantae</taxon>
        <taxon>Streptophyta</taxon>
        <taxon>Embryophyta</taxon>
        <taxon>Tracheophyta</taxon>
        <taxon>Spermatophyta</taxon>
        <taxon>Magnoliopsida</taxon>
        <taxon>eudicotyledons</taxon>
        <taxon>Gunneridae</taxon>
        <taxon>Pentapetalae</taxon>
        <taxon>rosids</taxon>
        <taxon>malvids</taxon>
        <taxon>Brassicales</taxon>
        <taxon>Brassicaceae</taxon>
        <taxon>Camelineae</taxon>
        <taxon>Arabidopsis</taxon>
    </lineage>
</organism>
<proteinExistence type="evidence at protein level"/>
<name>GSTUJ_ARATH</name>
<keyword id="KW-0963">Cytoplasm</keyword>
<keyword id="KW-0216">Detoxification</keyword>
<keyword id="KW-0560">Oxidoreductase</keyword>
<keyword id="KW-0575">Peroxidase</keyword>
<keyword id="KW-0597">Phosphoprotein</keyword>
<keyword id="KW-1185">Reference proteome</keyword>
<keyword id="KW-0346">Stress response</keyword>
<keyword id="KW-0808">Transferase</keyword>